<comment type="cofactor">
    <cofactor evidence="1">
        <name>Mg(2+)</name>
        <dbReference type="ChEBI" id="CHEBI:18420"/>
    </cofactor>
    <cofactor evidence="1">
        <name>Mn(2+)</name>
        <dbReference type="ChEBI" id="CHEBI:29035"/>
    </cofactor>
    <text evidence="1">Binds 2 magnesium or manganese ions per subunit.</text>
</comment>
<comment type="similarity">
    <text evidence="1">Belongs to the RimK family.</text>
</comment>
<evidence type="ECO:0000255" key="1">
    <source>
        <dbReference type="HAMAP-Rule" id="MF_01552"/>
    </source>
</evidence>
<feature type="chain" id="PRO_1000068846" description="Probable alpha-L-glutamate ligase">
    <location>
        <begin position="1"/>
        <end position="301"/>
    </location>
</feature>
<feature type="domain" description="ATP-grasp" evidence="1">
    <location>
        <begin position="104"/>
        <end position="287"/>
    </location>
</feature>
<feature type="binding site" evidence="1">
    <location>
        <position position="141"/>
    </location>
    <ligand>
        <name>ATP</name>
        <dbReference type="ChEBI" id="CHEBI:30616"/>
    </ligand>
</feature>
<feature type="binding site" evidence="1">
    <location>
        <begin position="178"/>
        <end position="179"/>
    </location>
    <ligand>
        <name>ATP</name>
        <dbReference type="ChEBI" id="CHEBI:30616"/>
    </ligand>
</feature>
<feature type="binding site" evidence="1">
    <location>
        <position position="187"/>
    </location>
    <ligand>
        <name>ATP</name>
        <dbReference type="ChEBI" id="CHEBI:30616"/>
    </ligand>
</feature>
<feature type="binding site" evidence="1">
    <location>
        <begin position="211"/>
        <end position="213"/>
    </location>
    <ligand>
        <name>ATP</name>
        <dbReference type="ChEBI" id="CHEBI:30616"/>
    </ligand>
</feature>
<feature type="binding site" evidence="1">
    <location>
        <position position="248"/>
    </location>
    <ligand>
        <name>Mg(2+)</name>
        <dbReference type="ChEBI" id="CHEBI:18420"/>
        <label>1</label>
    </ligand>
</feature>
<feature type="binding site" evidence="1">
    <location>
        <position position="248"/>
    </location>
    <ligand>
        <name>Mn(2+)</name>
        <dbReference type="ChEBI" id="CHEBI:29035"/>
        <label>1</label>
    </ligand>
</feature>
<feature type="binding site" evidence="1">
    <location>
        <position position="260"/>
    </location>
    <ligand>
        <name>Mg(2+)</name>
        <dbReference type="ChEBI" id="CHEBI:18420"/>
        <label>1</label>
    </ligand>
</feature>
<feature type="binding site" evidence="1">
    <location>
        <position position="260"/>
    </location>
    <ligand>
        <name>Mg(2+)</name>
        <dbReference type="ChEBI" id="CHEBI:18420"/>
        <label>2</label>
    </ligand>
</feature>
<feature type="binding site" evidence="1">
    <location>
        <position position="260"/>
    </location>
    <ligand>
        <name>Mn(2+)</name>
        <dbReference type="ChEBI" id="CHEBI:29035"/>
        <label>1</label>
    </ligand>
</feature>
<feature type="binding site" evidence="1">
    <location>
        <position position="260"/>
    </location>
    <ligand>
        <name>Mn(2+)</name>
        <dbReference type="ChEBI" id="CHEBI:29035"/>
        <label>2</label>
    </ligand>
</feature>
<feature type="binding site" evidence="1">
    <location>
        <position position="262"/>
    </location>
    <ligand>
        <name>Mg(2+)</name>
        <dbReference type="ChEBI" id="CHEBI:18420"/>
        <label>2</label>
    </ligand>
</feature>
<feature type="binding site" evidence="1">
    <location>
        <position position="262"/>
    </location>
    <ligand>
        <name>Mn(2+)</name>
        <dbReference type="ChEBI" id="CHEBI:29035"/>
        <label>2</label>
    </ligand>
</feature>
<accession>A6VDX3</accession>
<reference key="1">
    <citation type="submission" date="2007-06" db="EMBL/GenBank/DDBJ databases">
        <authorList>
            <person name="Dodson R.J."/>
            <person name="Harkins D."/>
            <person name="Paulsen I.T."/>
        </authorList>
    </citation>
    <scope>NUCLEOTIDE SEQUENCE [LARGE SCALE GENOMIC DNA]</scope>
    <source>
        <strain>DSM 24068 / PA7</strain>
    </source>
</reference>
<sequence>MKIAVLSRNPRLYSTRRLVEAGRERGHEMVVIDTLRAYMNIASHKPQIHYRGQPLEGFDAVIPRIGASVTFYGCAVLRQFEMMGVFPLNESVAIARSRDKLRSLQLLSRKGIGLPVTGFAHSPDDVPDLIEMVGGAPLVIKLLEGTQGIGVVLCETEKAAESVLEAFMGLKHNIMVQEYIKEAGGADIRCFVVGDKVIASMKRQAAPGEFRSNLHRGGSASLIKITPEERMTAIRAARVMGLNVAGVDILRSNHGPLVMEVNSSPGLEGIESTTGKDIAGIIIQYLEKNGGPHLARTKGKG</sequence>
<gene>
    <name evidence="1" type="primary">rimK</name>
    <name type="ordered locus">PSPA7_5941</name>
</gene>
<protein>
    <recommendedName>
        <fullName evidence="1">Probable alpha-L-glutamate ligase</fullName>
        <ecNumber evidence="1">6.3.2.-</ecNumber>
    </recommendedName>
</protein>
<keyword id="KW-0067">ATP-binding</keyword>
<keyword id="KW-0436">Ligase</keyword>
<keyword id="KW-0460">Magnesium</keyword>
<keyword id="KW-0464">Manganese</keyword>
<keyword id="KW-0479">Metal-binding</keyword>
<keyword id="KW-0547">Nucleotide-binding</keyword>
<keyword id="KW-0648">Protein biosynthesis</keyword>
<dbReference type="EC" id="6.3.2.-" evidence="1"/>
<dbReference type="EMBL" id="CP000744">
    <property type="protein sequence ID" value="ABR81246.1"/>
    <property type="molecule type" value="Genomic_DNA"/>
</dbReference>
<dbReference type="RefSeq" id="WP_003096254.1">
    <property type="nucleotide sequence ID" value="NC_009656.1"/>
</dbReference>
<dbReference type="SMR" id="A6VDX3"/>
<dbReference type="GeneID" id="77223730"/>
<dbReference type="KEGG" id="pap:PSPA7_5941"/>
<dbReference type="HOGENOM" id="CLU_054353_0_1_6"/>
<dbReference type="Proteomes" id="UP000001582">
    <property type="component" value="Chromosome"/>
</dbReference>
<dbReference type="GO" id="GO:0005737">
    <property type="term" value="C:cytoplasm"/>
    <property type="evidence" value="ECO:0007669"/>
    <property type="project" value="TreeGrafter"/>
</dbReference>
<dbReference type="GO" id="GO:0005524">
    <property type="term" value="F:ATP binding"/>
    <property type="evidence" value="ECO:0007669"/>
    <property type="project" value="UniProtKB-UniRule"/>
</dbReference>
<dbReference type="GO" id="GO:0046872">
    <property type="term" value="F:metal ion binding"/>
    <property type="evidence" value="ECO:0007669"/>
    <property type="project" value="UniProtKB-KW"/>
</dbReference>
<dbReference type="GO" id="GO:0018169">
    <property type="term" value="F:ribosomal S6-glutamic acid ligase activity"/>
    <property type="evidence" value="ECO:0007669"/>
    <property type="project" value="TreeGrafter"/>
</dbReference>
<dbReference type="GO" id="GO:0036211">
    <property type="term" value="P:protein modification process"/>
    <property type="evidence" value="ECO:0007669"/>
    <property type="project" value="InterPro"/>
</dbReference>
<dbReference type="GO" id="GO:0009432">
    <property type="term" value="P:SOS response"/>
    <property type="evidence" value="ECO:0007669"/>
    <property type="project" value="TreeGrafter"/>
</dbReference>
<dbReference type="GO" id="GO:0006412">
    <property type="term" value="P:translation"/>
    <property type="evidence" value="ECO:0007669"/>
    <property type="project" value="UniProtKB-KW"/>
</dbReference>
<dbReference type="FunFam" id="3.40.50.20:FF:000004">
    <property type="entry name" value="Probable alpha-L-glutamate ligase"/>
    <property type="match status" value="1"/>
</dbReference>
<dbReference type="FunFam" id="3.30.1490.20:FF:000005">
    <property type="entry name" value="Probable alpha-L-glutamate ligase 1"/>
    <property type="match status" value="1"/>
</dbReference>
<dbReference type="FunFam" id="3.30.470.20:FF:000016">
    <property type="entry name" value="Ribosomal protein S6--L-glutamate ligase"/>
    <property type="match status" value="1"/>
</dbReference>
<dbReference type="Gene3D" id="3.40.50.20">
    <property type="match status" value="1"/>
</dbReference>
<dbReference type="Gene3D" id="3.30.1490.20">
    <property type="entry name" value="ATP-grasp fold, A domain"/>
    <property type="match status" value="1"/>
</dbReference>
<dbReference type="Gene3D" id="3.30.470.20">
    <property type="entry name" value="ATP-grasp fold, B domain"/>
    <property type="match status" value="1"/>
</dbReference>
<dbReference type="HAMAP" id="MF_01552">
    <property type="entry name" value="RimK"/>
    <property type="match status" value="1"/>
</dbReference>
<dbReference type="InterPro" id="IPR011761">
    <property type="entry name" value="ATP-grasp"/>
</dbReference>
<dbReference type="InterPro" id="IPR013651">
    <property type="entry name" value="ATP-grasp_RimK-type"/>
</dbReference>
<dbReference type="InterPro" id="IPR013815">
    <property type="entry name" value="ATP_grasp_subdomain_1"/>
</dbReference>
<dbReference type="InterPro" id="IPR023533">
    <property type="entry name" value="RimK"/>
</dbReference>
<dbReference type="InterPro" id="IPR041107">
    <property type="entry name" value="Rimk_N"/>
</dbReference>
<dbReference type="InterPro" id="IPR004666">
    <property type="entry name" value="Rp_bS6_RimK/Lys_biosynth_LsyX"/>
</dbReference>
<dbReference type="NCBIfam" id="NF007764">
    <property type="entry name" value="PRK10446.1"/>
    <property type="match status" value="1"/>
</dbReference>
<dbReference type="NCBIfam" id="TIGR00768">
    <property type="entry name" value="rimK_fam"/>
    <property type="match status" value="1"/>
</dbReference>
<dbReference type="PANTHER" id="PTHR21621:SF7">
    <property type="entry name" value="RIBOSOMAL PROTEIN BS6--L-GLUTAMATE LIGASE"/>
    <property type="match status" value="1"/>
</dbReference>
<dbReference type="PANTHER" id="PTHR21621">
    <property type="entry name" value="RIBOSOMAL PROTEIN S6 MODIFICATION PROTEIN"/>
    <property type="match status" value="1"/>
</dbReference>
<dbReference type="Pfam" id="PF08443">
    <property type="entry name" value="RimK"/>
    <property type="match status" value="1"/>
</dbReference>
<dbReference type="Pfam" id="PF18030">
    <property type="entry name" value="Rimk_N"/>
    <property type="match status" value="1"/>
</dbReference>
<dbReference type="SUPFAM" id="SSF56059">
    <property type="entry name" value="Glutathione synthetase ATP-binding domain-like"/>
    <property type="match status" value="1"/>
</dbReference>
<dbReference type="PROSITE" id="PS50975">
    <property type="entry name" value="ATP_GRASP"/>
    <property type="match status" value="1"/>
</dbReference>
<name>RIMK_PSEP7</name>
<proteinExistence type="inferred from homology"/>
<organism>
    <name type="scientific">Pseudomonas paraeruginosa (strain DSM 24068 / PA7)</name>
    <name type="common">Pseudomonas aeruginosa (strain PA7)</name>
    <dbReference type="NCBI Taxonomy" id="381754"/>
    <lineage>
        <taxon>Bacteria</taxon>
        <taxon>Pseudomonadati</taxon>
        <taxon>Pseudomonadota</taxon>
        <taxon>Gammaproteobacteria</taxon>
        <taxon>Pseudomonadales</taxon>
        <taxon>Pseudomonadaceae</taxon>
        <taxon>Pseudomonas</taxon>
        <taxon>Pseudomonas paraeruginosa</taxon>
    </lineage>
</organism>